<name>RUVB_PSEAB</name>
<proteinExistence type="inferred from homology"/>
<sequence>MIEPDRLISAVSGRERDEQLDRAIRPLKLADYIGQPSVREQMELFIHAARGRQEALDHTLIFGPPGLGKTTLANIIAQEMGVSIKSTSGPVLERPGDLAALLTNLEAGDVLFVDEIHRLSPIVEEVLYPAMEDFQLDIMIGEGPAARSIKLDLPPFTLVGATTRAGMLTNPLRDRFGIVQRLEFYNVEDLATIVSRSAGILGLEIEPQGAAEIAKRARGTPRIANRLLRRVRDFAEVRGQGDITRVIADKALNLLDVDERGFDHLDRRLLLTMIDKFDGGPVGIDNLAAALSEERHTIEDVLEPYLIQQGYIMRTPRGRVVTRHAYLHFGLNIPKRLGPGVTTDLFTSEDGN</sequence>
<organism>
    <name type="scientific">Pseudomonas aeruginosa (strain UCBPP-PA14)</name>
    <dbReference type="NCBI Taxonomy" id="208963"/>
    <lineage>
        <taxon>Bacteria</taxon>
        <taxon>Pseudomonadati</taxon>
        <taxon>Pseudomonadota</taxon>
        <taxon>Gammaproteobacteria</taxon>
        <taxon>Pseudomonadales</taxon>
        <taxon>Pseudomonadaceae</taxon>
        <taxon>Pseudomonas</taxon>
    </lineage>
</organism>
<accession>Q02IC9</accession>
<evidence type="ECO:0000255" key="1">
    <source>
        <dbReference type="HAMAP-Rule" id="MF_00016"/>
    </source>
</evidence>
<comment type="function">
    <text evidence="1">The RuvA-RuvB-RuvC complex processes Holliday junction (HJ) DNA during genetic recombination and DNA repair, while the RuvA-RuvB complex plays an important role in the rescue of blocked DNA replication forks via replication fork reversal (RFR). RuvA specifically binds to HJ cruciform DNA, conferring on it an open structure. The RuvB hexamer acts as an ATP-dependent pump, pulling dsDNA into and through the RuvAB complex. RuvB forms 2 homohexamers on either side of HJ DNA bound by 1 or 2 RuvA tetramers; 4 subunits per hexamer contact DNA at a time. Coordinated motions by a converter formed by DNA-disengaged RuvB subunits stimulates ATP hydrolysis and nucleotide exchange. Immobilization of the converter enables RuvB to convert the ATP-contained energy into a lever motion, pulling 2 nucleotides of DNA out of the RuvA tetramer per ATP hydrolyzed, thus driving DNA branch migration. The RuvB motors rotate together with the DNA substrate, which together with the progressing nucleotide cycle form the mechanistic basis for DNA recombination by continuous HJ branch migration. Branch migration allows RuvC to scan DNA until it finds its consensus sequence, where it cleaves and resolves cruciform DNA.</text>
</comment>
<comment type="catalytic activity">
    <reaction evidence="1">
        <text>ATP + H2O = ADP + phosphate + H(+)</text>
        <dbReference type="Rhea" id="RHEA:13065"/>
        <dbReference type="ChEBI" id="CHEBI:15377"/>
        <dbReference type="ChEBI" id="CHEBI:15378"/>
        <dbReference type="ChEBI" id="CHEBI:30616"/>
        <dbReference type="ChEBI" id="CHEBI:43474"/>
        <dbReference type="ChEBI" id="CHEBI:456216"/>
    </reaction>
</comment>
<comment type="subunit">
    <text evidence="1">Homohexamer. Forms an RuvA(8)-RuvB(12)-Holliday junction (HJ) complex. HJ DNA is sandwiched between 2 RuvA tetramers; dsDNA enters through RuvA and exits via RuvB. An RuvB hexamer assembles on each DNA strand where it exits the tetramer. Each RuvB hexamer is contacted by two RuvA subunits (via domain III) on 2 adjacent RuvB subunits; this complex drives branch migration. In the full resolvosome a probable DNA-RuvA(4)-RuvB(12)-RuvC(2) complex forms which resolves the HJ.</text>
</comment>
<comment type="subcellular location">
    <subcellularLocation>
        <location evidence="1">Cytoplasm</location>
    </subcellularLocation>
</comment>
<comment type="domain">
    <text evidence="1">Has 3 domains, the large (RuvB-L) and small ATPase (RuvB-S) domains and the C-terminal head (RuvB-H) domain. The head domain binds DNA, while the ATPase domains jointly bind ATP, ADP or are empty depending on the state of the subunit in the translocation cycle. During a single DNA translocation step the structure of each domain remains the same, but their relative positions change.</text>
</comment>
<comment type="similarity">
    <text evidence="1">Belongs to the RuvB family.</text>
</comment>
<dbReference type="EC" id="3.6.4.-" evidence="1"/>
<dbReference type="EMBL" id="CP000438">
    <property type="protein sequence ID" value="ABJ10128.1"/>
    <property type="molecule type" value="Genomic_DNA"/>
</dbReference>
<dbReference type="RefSeq" id="WP_003086123.1">
    <property type="nucleotide sequence ID" value="NZ_CP034244.1"/>
</dbReference>
<dbReference type="SMR" id="Q02IC9"/>
<dbReference type="KEGG" id="pau:PA14_51780"/>
<dbReference type="PseudoCAP" id="PA14_51780"/>
<dbReference type="HOGENOM" id="CLU_055599_1_0_6"/>
<dbReference type="BioCyc" id="PAER208963:G1G74-4355-MONOMER"/>
<dbReference type="Proteomes" id="UP000000653">
    <property type="component" value="Chromosome"/>
</dbReference>
<dbReference type="GO" id="GO:0005737">
    <property type="term" value="C:cytoplasm"/>
    <property type="evidence" value="ECO:0007669"/>
    <property type="project" value="UniProtKB-SubCell"/>
</dbReference>
<dbReference type="GO" id="GO:0048476">
    <property type="term" value="C:Holliday junction resolvase complex"/>
    <property type="evidence" value="ECO:0007669"/>
    <property type="project" value="UniProtKB-UniRule"/>
</dbReference>
<dbReference type="GO" id="GO:0005524">
    <property type="term" value="F:ATP binding"/>
    <property type="evidence" value="ECO:0007669"/>
    <property type="project" value="UniProtKB-UniRule"/>
</dbReference>
<dbReference type="GO" id="GO:0016887">
    <property type="term" value="F:ATP hydrolysis activity"/>
    <property type="evidence" value="ECO:0007669"/>
    <property type="project" value="InterPro"/>
</dbReference>
<dbReference type="GO" id="GO:0000400">
    <property type="term" value="F:four-way junction DNA binding"/>
    <property type="evidence" value="ECO:0007669"/>
    <property type="project" value="UniProtKB-UniRule"/>
</dbReference>
<dbReference type="GO" id="GO:0009378">
    <property type="term" value="F:four-way junction helicase activity"/>
    <property type="evidence" value="ECO:0007669"/>
    <property type="project" value="InterPro"/>
</dbReference>
<dbReference type="GO" id="GO:0006310">
    <property type="term" value="P:DNA recombination"/>
    <property type="evidence" value="ECO:0007669"/>
    <property type="project" value="UniProtKB-UniRule"/>
</dbReference>
<dbReference type="GO" id="GO:0006281">
    <property type="term" value="P:DNA repair"/>
    <property type="evidence" value="ECO:0007669"/>
    <property type="project" value="UniProtKB-UniRule"/>
</dbReference>
<dbReference type="CDD" id="cd00009">
    <property type="entry name" value="AAA"/>
    <property type="match status" value="1"/>
</dbReference>
<dbReference type="FunFam" id="1.10.10.10:FF:000086">
    <property type="entry name" value="Holliday junction ATP-dependent DNA helicase RuvB"/>
    <property type="match status" value="1"/>
</dbReference>
<dbReference type="FunFam" id="1.10.8.60:FF:000023">
    <property type="entry name" value="Holliday junction ATP-dependent DNA helicase RuvB"/>
    <property type="match status" value="1"/>
</dbReference>
<dbReference type="FunFam" id="3.40.50.300:FF:000073">
    <property type="entry name" value="Holliday junction ATP-dependent DNA helicase RuvB"/>
    <property type="match status" value="1"/>
</dbReference>
<dbReference type="Gene3D" id="1.10.8.60">
    <property type="match status" value="1"/>
</dbReference>
<dbReference type="Gene3D" id="3.40.50.300">
    <property type="entry name" value="P-loop containing nucleotide triphosphate hydrolases"/>
    <property type="match status" value="1"/>
</dbReference>
<dbReference type="Gene3D" id="1.10.10.10">
    <property type="entry name" value="Winged helix-like DNA-binding domain superfamily/Winged helix DNA-binding domain"/>
    <property type="match status" value="1"/>
</dbReference>
<dbReference type="HAMAP" id="MF_00016">
    <property type="entry name" value="DNA_HJ_migration_RuvB"/>
    <property type="match status" value="1"/>
</dbReference>
<dbReference type="InterPro" id="IPR003593">
    <property type="entry name" value="AAA+_ATPase"/>
</dbReference>
<dbReference type="InterPro" id="IPR041445">
    <property type="entry name" value="AAA_lid_4"/>
</dbReference>
<dbReference type="InterPro" id="IPR004605">
    <property type="entry name" value="DNA_helicase_Holl-junc_RuvB"/>
</dbReference>
<dbReference type="InterPro" id="IPR027417">
    <property type="entry name" value="P-loop_NTPase"/>
</dbReference>
<dbReference type="InterPro" id="IPR008824">
    <property type="entry name" value="RuvB-like_N"/>
</dbReference>
<dbReference type="InterPro" id="IPR008823">
    <property type="entry name" value="RuvB_C"/>
</dbReference>
<dbReference type="InterPro" id="IPR036388">
    <property type="entry name" value="WH-like_DNA-bd_sf"/>
</dbReference>
<dbReference type="InterPro" id="IPR036390">
    <property type="entry name" value="WH_DNA-bd_sf"/>
</dbReference>
<dbReference type="NCBIfam" id="NF000868">
    <property type="entry name" value="PRK00080.1"/>
    <property type="match status" value="1"/>
</dbReference>
<dbReference type="NCBIfam" id="TIGR00635">
    <property type="entry name" value="ruvB"/>
    <property type="match status" value="1"/>
</dbReference>
<dbReference type="PANTHER" id="PTHR42848">
    <property type="match status" value="1"/>
</dbReference>
<dbReference type="PANTHER" id="PTHR42848:SF1">
    <property type="entry name" value="HOLLIDAY JUNCTION BRANCH MIGRATION COMPLEX SUBUNIT RUVB"/>
    <property type="match status" value="1"/>
</dbReference>
<dbReference type="Pfam" id="PF17864">
    <property type="entry name" value="AAA_lid_4"/>
    <property type="match status" value="1"/>
</dbReference>
<dbReference type="Pfam" id="PF05491">
    <property type="entry name" value="RuvB_C"/>
    <property type="match status" value="1"/>
</dbReference>
<dbReference type="Pfam" id="PF05496">
    <property type="entry name" value="RuvB_N"/>
    <property type="match status" value="1"/>
</dbReference>
<dbReference type="SMART" id="SM00382">
    <property type="entry name" value="AAA"/>
    <property type="match status" value="1"/>
</dbReference>
<dbReference type="SUPFAM" id="SSF52540">
    <property type="entry name" value="P-loop containing nucleoside triphosphate hydrolases"/>
    <property type="match status" value="1"/>
</dbReference>
<dbReference type="SUPFAM" id="SSF46785">
    <property type="entry name" value="Winged helix' DNA-binding domain"/>
    <property type="match status" value="1"/>
</dbReference>
<feature type="chain" id="PRO_1000001447" description="Holliday junction branch migration complex subunit RuvB">
    <location>
        <begin position="1"/>
        <end position="352"/>
    </location>
</feature>
<feature type="region of interest" description="Large ATPase domain (RuvB-L)" evidence="1">
    <location>
        <begin position="4"/>
        <end position="185"/>
    </location>
</feature>
<feature type="region of interest" description="Small ATPAse domain (RuvB-S)" evidence="1">
    <location>
        <begin position="186"/>
        <end position="256"/>
    </location>
</feature>
<feature type="region of interest" description="Head domain (RuvB-H)" evidence="1">
    <location>
        <begin position="259"/>
        <end position="352"/>
    </location>
</feature>
<feature type="binding site" evidence="1">
    <location>
        <position position="24"/>
    </location>
    <ligand>
        <name>ATP</name>
        <dbReference type="ChEBI" id="CHEBI:30616"/>
    </ligand>
</feature>
<feature type="binding site" evidence="1">
    <location>
        <position position="25"/>
    </location>
    <ligand>
        <name>ATP</name>
        <dbReference type="ChEBI" id="CHEBI:30616"/>
    </ligand>
</feature>
<feature type="binding site" evidence="1">
    <location>
        <position position="66"/>
    </location>
    <ligand>
        <name>ATP</name>
        <dbReference type="ChEBI" id="CHEBI:30616"/>
    </ligand>
</feature>
<feature type="binding site" evidence="1">
    <location>
        <position position="69"/>
    </location>
    <ligand>
        <name>ATP</name>
        <dbReference type="ChEBI" id="CHEBI:30616"/>
    </ligand>
</feature>
<feature type="binding site" evidence="1">
    <location>
        <position position="70"/>
    </location>
    <ligand>
        <name>ATP</name>
        <dbReference type="ChEBI" id="CHEBI:30616"/>
    </ligand>
</feature>
<feature type="binding site" evidence="1">
    <location>
        <position position="70"/>
    </location>
    <ligand>
        <name>Mg(2+)</name>
        <dbReference type="ChEBI" id="CHEBI:18420"/>
    </ligand>
</feature>
<feature type="binding site" evidence="1">
    <location>
        <position position="71"/>
    </location>
    <ligand>
        <name>ATP</name>
        <dbReference type="ChEBI" id="CHEBI:30616"/>
    </ligand>
</feature>
<feature type="binding site" evidence="1">
    <location>
        <begin position="132"/>
        <end position="134"/>
    </location>
    <ligand>
        <name>ATP</name>
        <dbReference type="ChEBI" id="CHEBI:30616"/>
    </ligand>
</feature>
<feature type="binding site" evidence="1">
    <location>
        <position position="175"/>
    </location>
    <ligand>
        <name>ATP</name>
        <dbReference type="ChEBI" id="CHEBI:30616"/>
    </ligand>
</feature>
<feature type="binding site" evidence="1">
    <location>
        <position position="185"/>
    </location>
    <ligand>
        <name>ATP</name>
        <dbReference type="ChEBI" id="CHEBI:30616"/>
    </ligand>
</feature>
<feature type="binding site" evidence="1">
    <location>
        <position position="222"/>
    </location>
    <ligand>
        <name>ATP</name>
        <dbReference type="ChEBI" id="CHEBI:30616"/>
    </ligand>
</feature>
<feature type="binding site" evidence="1">
    <location>
        <position position="295"/>
    </location>
    <ligand>
        <name>DNA</name>
        <dbReference type="ChEBI" id="CHEBI:16991"/>
    </ligand>
</feature>
<feature type="binding site" evidence="1">
    <location>
        <position position="314"/>
    </location>
    <ligand>
        <name>DNA</name>
        <dbReference type="ChEBI" id="CHEBI:16991"/>
    </ligand>
</feature>
<feature type="binding site" evidence="1">
    <location>
        <position position="319"/>
    </location>
    <ligand>
        <name>DNA</name>
        <dbReference type="ChEBI" id="CHEBI:16991"/>
    </ligand>
</feature>
<gene>
    <name evidence="1" type="primary">ruvB</name>
    <name type="ordered locus">PA14_51780</name>
</gene>
<keyword id="KW-0067">ATP-binding</keyword>
<keyword id="KW-0963">Cytoplasm</keyword>
<keyword id="KW-0227">DNA damage</keyword>
<keyword id="KW-0233">DNA recombination</keyword>
<keyword id="KW-0234">DNA repair</keyword>
<keyword id="KW-0238">DNA-binding</keyword>
<keyword id="KW-0378">Hydrolase</keyword>
<keyword id="KW-0547">Nucleotide-binding</keyword>
<reference key="1">
    <citation type="journal article" date="2006" name="Genome Biol.">
        <title>Genomic analysis reveals that Pseudomonas aeruginosa virulence is combinatorial.</title>
        <authorList>
            <person name="Lee D.G."/>
            <person name="Urbach J.M."/>
            <person name="Wu G."/>
            <person name="Liberati N.T."/>
            <person name="Feinbaum R.L."/>
            <person name="Miyata S."/>
            <person name="Diggins L.T."/>
            <person name="He J."/>
            <person name="Saucier M."/>
            <person name="Deziel E."/>
            <person name="Friedman L."/>
            <person name="Li L."/>
            <person name="Grills G."/>
            <person name="Montgomery K."/>
            <person name="Kucherlapati R."/>
            <person name="Rahme L.G."/>
            <person name="Ausubel F.M."/>
        </authorList>
    </citation>
    <scope>NUCLEOTIDE SEQUENCE [LARGE SCALE GENOMIC DNA]</scope>
    <source>
        <strain>UCBPP-PA14</strain>
    </source>
</reference>
<protein>
    <recommendedName>
        <fullName evidence="1">Holliday junction branch migration complex subunit RuvB</fullName>
        <ecNumber evidence="1">3.6.4.-</ecNumber>
    </recommendedName>
</protein>